<proteinExistence type="inferred from homology"/>
<dbReference type="EC" id="2.7.4.6" evidence="1"/>
<dbReference type="EMBL" id="CP001157">
    <property type="protein sequence ID" value="ACO80169.1"/>
    <property type="molecule type" value="Genomic_DNA"/>
</dbReference>
<dbReference type="RefSeq" id="WP_012702544.1">
    <property type="nucleotide sequence ID" value="NC_012560.1"/>
</dbReference>
<dbReference type="SMR" id="C1DE61"/>
<dbReference type="STRING" id="322710.Avin_40330"/>
<dbReference type="EnsemblBacteria" id="ACO80169">
    <property type="protein sequence ID" value="ACO80169"/>
    <property type="gene ID" value="Avin_40330"/>
</dbReference>
<dbReference type="GeneID" id="88186976"/>
<dbReference type="KEGG" id="avn:Avin_40330"/>
<dbReference type="eggNOG" id="COG0105">
    <property type="taxonomic scope" value="Bacteria"/>
</dbReference>
<dbReference type="HOGENOM" id="CLU_060216_8_1_6"/>
<dbReference type="OrthoDB" id="9801161at2"/>
<dbReference type="Proteomes" id="UP000002424">
    <property type="component" value="Chromosome"/>
</dbReference>
<dbReference type="GO" id="GO:0005737">
    <property type="term" value="C:cytoplasm"/>
    <property type="evidence" value="ECO:0007669"/>
    <property type="project" value="UniProtKB-SubCell"/>
</dbReference>
<dbReference type="GO" id="GO:0005524">
    <property type="term" value="F:ATP binding"/>
    <property type="evidence" value="ECO:0007669"/>
    <property type="project" value="UniProtKB-UniRule"/>
</dbReference>
<dbReference type="GO" id="GO:0046872">
    <property type="term" value="F:metal ion binding"/>
    <property type="evidence" value="ECO:0007669"/>
    <property type="project" value="UniProtKB-KW"/>
</dbReference>
<dbReference type="GO" id="GO:0004550">
    <property type="term" value="F:nucleoside diphosphate kinase activity"/>
    <property type="evidence" value="ECO:0007669"/>
    <property type="project" value="UniProtKB-UniRule"/>
</dbReference>
<dbReference type="GO" id="GO:0006241">
    <property type="term" value="P:CTP biosynthetic process"/>
    <property type="evidence" value="ECO:0007669"/>
    <property type="project" value="UniProtKB-UniRule"/>
</dbReference>
<dbReference type="GO" id="GO:0006183">
    <property type="term" value="P:GTP biosynthetic process"/>
    <property type="evidence" value="ECO:0007669"/>
    <property type="project" value="UniProtKB-UniRule"/>
</dbReference>
<dbReference type="GO" id="GO:0006228">
    <property type="term" value="P:UTP biosynthetic process"/>
    <property type="evidence" value="ECO:0007669"/>
    <property type="project" value="UniProtKB-UniRule"/>
</dbReference>
<dbReference type="CDD" id="cd04413">
    <property type="entry name" value="NDPk_I"/>
    <property type="match status" value="1"/>
</dbReference>
<dbReference type="FunFam" id="3.30.70.141:FF:000001">
    <property type="entry name" value="Nucleoside diphosphate kinase"/>
    <property type="match status" value="1"/>
</dbReference>
<dbReference type="Gene3D" id="3.30.70.141">
    <property type="entry name" value="Nucleoside diphosphate kinase-like domain"/>
    <property type="match status" value="1"/>
</dbReference>
<dbReference type="HAMAP" id="MF_00451">
    <property type="entry name" value="NDP_kinase"/>
    <property type="match status" value="1"/>
</dbReference>
<dbReference type="InterPro" id="IPR034907">
    <property type="entry name" value="NDK-like_dom"/>
</dbReference>
<dbReference type="InterPro" id="IPR036850">
    <property type="entry name" value="NDK-like_dom_sf"/>
</dbReference>
<dbReference type="InterPro" id="IPR001564">
    <property type="entry name" value="Nucleoside_diP_kinase"/>
</dbReference>
<dbReference type="InterPro" id="IPR023005">
    <property type="entry name" value="Nucleoside_diP_kinase_AS"/>
</dbReference>
<dbReference type="NCBIfam" id="NF001908">
    <property type="entry name" value="PRK00668.1"/>
    <property type="match status" value="1"/>
</dbReference>
<dbReference type="PANTHER" id="PTHR46161">
    <property type="entry name" value="NUCLEOSIDE DIPHOSPHATE KINASE"/>
    <property type="match status" value="1"/>
</dbReference>
<dbReference type="PANTHER" id="PTHR46161:SF3">
    <property type="entry name" value="NUCLEOSIDE DIPHOSPHATE KINASE DDB_G0292928-RELATED"/>
    <property type="match status" value="1"/>
</dbReference>
<dbReference type="Pfam" id="PF00334">
    <property type="entry name" value="NDK"/>
    <property type="match status" value="1"/>
</dbReference>
<dbReference type="PRINTS" id="PR01243">
    <property type="entry name" value="NUCDPKINASE"/>
</dbReference>
<dbReference type="SMART" id="SM00562">
    <property type="entry name" value="NDK"/>
    <property type="match status" value="1"/>
</dbReference>
<dbReference type="SUPFAM" id="SSF54919">
    <property type="entry name" value="Nucleoside diphosphate kinase, NDK"/>
    <property type="match status" value="1"/>
</dbReference>
<dbReference type="PROSITE" id="PS00469">
    <property type="entry name" value="NDPK"/>
    <property type="match status" value="1"/>
</dbReference>
<dbReference type="PROSITE" id="PS51374">
    <property type="entry name" value="NDPK_LIKE"/>
    <property type="match status" value="1"/>
</dbReference>
<reference key="1">
    <citation type="journal article" date="2009" name="J. Bacteriol.">
        <title>Genome sequence of Azotobacter vinelandii, an obligate aerobe specialized to support diverse anaerobic metabolic processes.</title>
        <authorList>
            <person name="Setubal J.C."/>
            <person name="Dos Santos P."/>
            <person name="Goldman B.S."/>
            <person name="Ertesvaag H."/>
            <person name="Espin G."/>
            <person name="Rubio L.M."/>
            <person name="Valla S."/>
            <person name="Almeida N.F."/>
            <person name="Balasubramanian D."/>
            <person name="Cromes L."/>
            <person name="Curatti L."/>
            <person name="Du Z."/>
            <person name="Godsy E."/>
            <person name="Goodner B."/>
            <person name="Hellner-Burris K."/>
            <person name="Hernandez J.A."/>
            <person name="Houmiel K."/>
            <person name="Imperial J."/>
            <person name="Kennedy C."/>
            <person name="Larson T.J."/>
            <person name="Latreille P."/>
            <person name="Ligon L.S."/>
            <person name="Lu J."/>
            <person name="Maerk M."/>
            <person name="Miller N.M."/>
            <person name="Norton S."/>
            <person name="O'Carroll I.P."/>
            <person name="Paulsen I."/>
            <person name="Raulfs E.C."/>
            <person name="Roemer R."/>
            <person name="Rosser J."/>
            <person name="Segura D."/>
            <person name="Slater S."/>
            <person name="Stricklin S.L."/>
            <person name="Studholme D.J."/>
            <person name="Sun J."/>
            <person name="Viana C.J."/>
            <person name="Wallin E."/>
            <person name="Wang B."/>
            <person name="Wheeler C."/>
            <person name="Zhu H."/>
            <person name="Dean D.R."/>
            <person name="Dixon R."/>
            <person name="Wood D."/>
        </authorList>
    </citation>
    <scope>NUCLEOTIDE SEQUENCE [LARGE SCALE GENOMIC DNA]</scope>
    <source>
        <strain>DJ / ATCC BAA-1303</strain>
    </source>
</reference>
<protein>
    <recommendedName>
        <fullName evidence="1">Nucleoside diphosphate kinase</fullName>
        <shortName evidence="1">NDK</shortName>
        <shortName evidence="1">NDP kinase</shortName>
        <ecNumber evidence="1">2.7.4.6</ecNumber>
    </recommendedName>
    <alternativeName>
        <fullName evidence="1">Nucleoside-2-P kinase</fullName>
    </alternativeName>
</protein>
<accession>C1DE61</accession>
<comment type="function">
    <text evidence="1">Major role in the synthesis of nucleoside triphosphates other than ATP. The ATP gamma phosphate is transferred to the NDP beta phosphate via a ping-pong mechanism, using a phosphorylated active-site intermediate.</text>
</comment>
<comment type="catalytic activity">
    <reaction evidence="1">
        <text>a 2'-deoxyribonucleoside 5'-diphosphate + ATP = a 2'-deoxyribonucleoside 5'-triphosphate + ADP</text>
        <dbReference type="Rhea" id="RHEA:44640"/>
        <dbReference type="ChEBI" id="CHEBI:30616"/>
        <dbReference type="ChEBI" id="CHEBI:61560"/>
        <dbReference type="ChEBI" id="CHEBI:73316"/>
        <dbReference type="ChEBI" id="CHEBI:456216"/>
        <dbReference type="EC" id="2.7.4.6"/>
    </reaction>
</comment>
<comment type="catalytic activity">
    <reaction evidence="1">
        <text>a ribonucleoside 5'-diphosphate + ATP = a ribonucleoside 5'-triphosphate + ADP</text>
        <dbReference type="Rhea" id="RHEA:18113"/>
        <dbReference type="ChEBI" id="CHEBI:30616"/>
        <dbReference type="ChEBI" id="CHEBI:57930"/>
        <dbReference type="ChEBI" id="CHEBI:61557"/>
        <dbReference type="ChEBI" id="CHEBI:456216"/>
        <dbReference type="EC" id="2.7.4.6"/>
    </reaction>
</comment>
<comment type="cofactor">
    <cofactor evidence="1">
        <name>Mg(2+)</name>
        <dbReference type="ChEBI" id="CHEBI:18420"/>
    </cofactor>
</comment>
<comment type="subunit">
    <text evidence="1">Homotetramer.</text>
</comment>
<comment type="subcellular location">
    <subcellularLocation>
        <location evidence="1">Cytoplasm</location>
    </subcellularLocation>
</comment>
<comment type="similarity">
    <text evidence="1">Belongs to the NDK family.</text>
</comment>
<gene>
    <name evidence="1" type="primary">ndk</name>
    <name type="ordered locus">Avin_40330</name>
</gene>
<keyword id="KW-0067">ATP-binding</keyword>
<keyword id="KW-0963">Cytoplasm</keyword>
<keyword id="KW-0418">Kinase</keyword>
<keyword id="KW-0460">Magnesium</keyword>
<keyword id="KW-0479">Metal-binding</keyword>
<keyword id="KW-0546">Nucleotide metabolism</keyword>
<keyword id="KW-0547">Nucleotide-binding</keyword>
<keyword id="KW-0597">Phosphoprotein</keyword>
<keyword id="KW-0808">Transferase</keyword>
<sequence length="143" mass="15418">MAVERTLSIIKPDAVAKNVIGEILTRFEKAGLSVVAAKMVQLSEREAGGFYAEHKERPFFKDLVSFMTSGPVVVQVLEGEGAIAKNRELMGATDPKKAEPGTIRADFAVSIDENAVHGSDSEASAAREIAYFFAATEVCARIR</sequence>
<evidence type="ECO:0000255" key="1">
    <source>
        <dbReference type="HAMAP-Rule" id="MF_00451"/>
    </source>
</evidence>
<organism>
    <name type="scientific">Azotobacter vinelandii (strain DJ / ATCC BAA-1303)</name>
    <dbReference type="NCBI Taxonomy" id="322710"/>
    <lineage>
        <taxon>Bacteria</taxon>
        <taxon>Pseudomonadati</taxon>
        <taxon>Pseudomonadota</taxon>
        <taxon>Gammaproteobacteria</taxon>
        <taxon>Pseudomonadales</taxon>
        <taxon>Pseudomonadaceae</taxon>
        <taxon>Azotobacter</taxon>
    </lineage>
</organism>
<name>NDK_AZOVD</name>
<feature type="chain" id="PRO_1000206206" description="Nucleoside diphosphate kinase">
    <location>
        <begin position="1"/>
        <end position="143"/>
    </location>
</feature>
<feature type="active site" description="Pros-phosphohistidine intermediate" evidence="1">
    <location>
        <position position="117"/>
    </location>
</feature>
<feature type="binding site" evidence="1">
    <location>
        <position position="11"/>
    </location>
    <ligand>
        <name>ATP</name>
        <dbReference type="ChEBI" id="CHEBI:30616"/>
    </ligand>
</feature>
<feature type="binding site" evidence="1">
    <location>
        <position position="59"/>
    </location>
    <ligand>
        <name>ATP</name>
        <dbReference type="ChEBI" id="CHEBI:30616"/>
    </ligand>
</feature>
<feature type="binding site" evidence="1">
    <location>
        <position position="87"/>
    </location>
    <ligand>
        <name>ATP</name>
        <dbReference type="ChEBI" id="CHEBI:30616"/>
    </ligand>
</feature>
<feature type="binding site" evidence="1">
    <location>
        <position position="93"/>
    </location>
    <ligand>
        <name>ATP</name>
        <dbReference type="ChEBI" id="CHEBI:30616"/>
    </ligand>
</feature>
<feature type="binding site" evidence="1">
    <location>
        <position position="104"/>
    </location>
    <ligand>
        <name>ATP</name>
        <dbReference type="ChEBI" id="CHEBI:30616"/>
    </ligand>
</feature>
<feature type="binding site" evidence="1">
    <location>
        <position position="114"/>
    </location>
    <ligand>
        <name>ATP</name>
        <dbReference type="ChEBI" id="CHEBI:30616"/>
    </ligand>
</feature>